<accession>Q08082</accession>
<accession>A5VN72</accession>
<feature type="chain" id="PRO_0000173297" description="Putative transposase for insertion sequence element IS6501">
    <location>
        <begin position="1"/>
        <end position="130"/>
    </location>
</feature>
<feature type="sequence conflict" description="In Ref. 1; CAA50341." evidence="1" ref="1">
    <original>I</original>
    <variation>L</variation>
    <location>
        <position position="45"/>
    </location>
</feature>
<feature type="sequence conflict" description="In Ref. 1; CAA50341." evidence="1" ref="1">
    <original>L</original>
    <variation>M</variation>
    <location>
        <position position="85"/>
    </location>
</feature>
<comment type="function">
    <text>Involved in the transposition of the insertion sequence.</text>
</comment>
<comment type="similarity">
    <text evidence="1">Belongs to the transposase 11 family.</text>
</comment>
<comment type="sequence caution" evidence="1">
    <conflict type="erroneous initiation">
        <sequence resource="EMBL-CDS" id="CAA50341"/>
    </conflict>
    <text>Extended N-terminus.</text>
</comment>
<comment type="sequence caution" evidence="1">
    <conflict type="frameshift">
        <sequence resource="EMBL-CDS" id="CAA50341"/>
    </conflict>
</comment>
<protein>
    <recommendedName>
        <fullName>Putative transposase for insertion sequence element IS6501</fullName>
    </recommendedName>
</protein>
<gene>
    <name type="ordered locus">BOV_0130</name>
    <name type="ordered locus">BOV_0327</name>
    <name type="ordered locus">BOV_0345</name>
    <name type="ordered locus">BOV_0531</name>
    <name type="ordered locus">BOV_0725</name>
    <name type="ordered locus">BOV_0781</name>
    <name type="ordered locus">BOV_0838</name>
    <name type="ordered locus">BOV_0914</name>
    <name type="ordered locus">BOV_1037</name>
    <name type="ordered locus">BOV_1142</name>
    <name type="ordered locus">BOV_1154</name>
    <name type="ordered locus">BOV_1234</name>
    <name type="ordered locus">BOV_1381</name>
    <name type="ordered locus">BOV_1932</name>
    <name type="ordered locus">BOV_A0158</name>
    <name type="ordered locus">BOV_A0204</name>
    <name type="ordered locus">BOV_A0419</name>
    <name type="ordered locus">BOV_A0470</name>
    <name type="ordered locus">BOV_A0519</name>
    <name type="ordered locus">BOV_A0721</name>
</gene>
<sequence>MTTKLHAVVDAIGLPLRIKPTPGHYGDCPQASSLLSGLKGVGHVIADAAYDADHLRAFIASNLKATAQIKVNPTRSSVPTIDWRLYKERHQIECFFNKLKRYRRIALRCEKTLTAFMGFVHLACAMIWLR</sequence>
<proteinExistence type="inferred from homology"/>
<reference key="1">
    <citation type="journal article" date="1993" name="J. Gen. Microbiol.">
        <title>Identification and sequence analysis of IS6501, an insertion sequence in Brucella spp.: relationship between genomic structure and the number of IS6501 copies.</title>
        <authorList>
            <person name="Ouahrani S."/>
            <person name="Michaux S."/>
            <person name="Sri Widada J."/>
            <person name="Bourg G."/>
            <person name="Tournebize R."/>
            <person name="Ramuz M."/>
            <person name="Liautard J.-P."/>
        </authorList>
    </citation>
    <scope>NUCLEOTIDE SEQUENCE [GENOMIC DNA]</scope>
</reference>
<reference key="2">
    <citation type="journal article" date="2009" name="PLoS ONE">
        <title>Genome degradation in Brucella ovis corresponds with narrowing of its host range and tissue tropism.</title>
        <authorList>
            <person name="Tsolis R.M."/>
            <person name="Seshadri R."/>
            <person name="Santos R.L."/>
            <person name="Sangari F.J."/>
            <person name="Lobo J.M."/>
            <person name="de Jong M.F."/>
            <person name="Ren Q."/>
            <person name="Myers G."/>
            <person name="Brinkac L.M."/>
            <person name="Nelson W.C."/>
            <person name="Deboy R.T."/>
            <person name="Angiuoli S."/>
            <person name="Khouri H."/>
            <person name="Dimitrov G."/>
            <person name="Robinson J.R."/>
            <person name="Mulligan S."/>
            <person name="Walker R.L."/>
            <person name="Elzer P.E."/>
            <person name="Hassan K.A."/>
            <person name="Paulsen I.T."/>
        </authorList>
    </citation>
    <scope>NUCLEOTIDE SEQUENCE [LARGE SCALE GENOMIC DNA]</scope>
    <source>
        <strain>ATCC 25840 / 63/290 / NCTC 10512</strain>
    </source>
</reference>
<dbReference type="EMBL" id="X71024">
    <property type="protein sequence ID" value="CAA50341.1"/>
    <property type="status" value="ALT_SEQ"/>
    <property type="molecule type" value="Genomic_DNA"/>
</dbReference>
<dbReference type="EMBL" id="CP000708">
    <property type="protein sequence ID" value="ABQ60063.1"/>
    <property type="molecule type" value="Genomic_DNA"/>
</dbReference>
<dbReference type="EMBL" id="CP000708">
    <property type="protein sequence ID" value="ABQ60074.1"/>
    <property type="molecule type" value="Genomic_DNA"/>
</dbReference>
<dbReference type="EMBL" id="CP000708">
    <property type="protein sequence ID" value="ABQ60080.1"/>
    <property type="molecule type" value="Genomic_DNA"/>
</dbReference>
<dbReference type="EMBL" id="CP000708">
    <property type="protein sequence ID" value="ABQ60111.1"/>
    <property type="molecule type" value="Genomic_DNA"/>
</dbReference>
<dbReference type="EMBL" id="CP000708">
    <property type="protein sequence ID" value="ABQ60161.1"/>
    <property type="molecule type" value="Genomic_DNA"/>
</dbReference>
<dbReference type="EMBL" id="CP000708">
    <property type="protein sequence ID" value="ABQ60181.1"/>
    <property type="molecule type" value="Genomic_DNA"/>
</dbReference>
<dbReference type="EMBL" id="CP000708">
    <property type="protein sequence ID" value="ABQ60464.1"/>
    <property type="molecule type" value="Genomic_DNA"/>
</dbReference>
<dbReference type="EMBL" id="CP000708">
    <property type="protein sequence ID" value="ABQ60680.1"/>
    <property type="molecule type" value="Genomic_DNA"/>
</dbReference>
<dbReference type="EMBL" id="CP000708">
    <property type="protein sequence ID" value="ABQ61038.1"/>
    <property type="molecule type" value="Genomic_DNA"/>
</dbReference>
<dbReference type="EMBL" id="CP000708">
    <property type="protein sequence ID" value="ABQ61126.1"/>
    <property type="molecule type" value="Genomic_DNA"/>
</dbReference>
<dbReference type="EMBL" id="CP000708">
    <property type="protein sequence ID" value="ABQ61252.1"/>
    <property type="molecule type" value="Genomic_DNA"/>
</dbReference>
<dbReference type="EMBL" id="CP000708">
    <property type="protein sequence ID" value="ABQ61541.1"/>
    <property type="molecule type" value="Genomic_DNA"/>
</dbReference>
<dbReference type="EMBL" id="CP000708">
    <property type="protein sequence ID" value="ABQ61610.1"/>
    <property type="molecule type" value="Genomic_DNA"/>
</dbReference>
<dbReference type="EMBL" id="CP000708">
    <property type="protein sequence ID" value="ABQ61659.1"/>
    <property type="molecule type" value="Genomic_DNA"/>
</dbReference>
<dbReference type="EMBL" id="CP000709">
    <property type="protein sequence ID" value="ABQ62157.1"/>
    <property type="molecule type" value="Genomic_DNA"/>
</dbReference>
<dbReference type="EMBL" id="CP000709">
    <property type="protein sequence ID" value="ABQ62185.1"/>
    <property type="molecule type" value="Genomic_DNA"/>
</dbReference>
<dbReference type="EMBL" id="CP000709">
    <property type="protein sequence ID" value="ABQ62248.1"/>
    <property type="molecule type" value="Genomic_DNA"/>
</dbReference>
<dbReference type="EMBL" id="CP000709">
    <property type="protein sequence ID" value="ABQ62496.1"/>
    <property type="molecule type" value="Genomic_DNA"/>
</dbReference>
<dbReference type="EMBL" id="CP000709">
    <property type="protein sequence ID" value="ABQ62523.1"/>
    <property type="molecule type" value="Genomic_DNA"/>
</dbReference>
<dbReference type="EMBL" id="CP000709">
    <property type="protein sequence ID" value="ABQ62933.1"/>
    <property type="molecule type" value="Genomic_DNA"/>
</dbReference>
<dbReference type="PIR" id="I40239">
    <property type="entry name" value="I40239"/>
</dbReference>
<dbReference type="KEGG" id="bov:BOV_0130"/>
<dbReference type="KEGG" id="bov:BOV_0327"/>
<dbReference type="KEGG" id="bov:BOV_0345"/>
<dbReference type="KEGG" id="bov:BOV_0531"/>
<dbReference type="KEGG" id="bov:BOV_0725"/>
<dbReference type="KEGG" id="bov:BOV_0781"/>
<dbReference type="KEGG" id="bov:BOV_0838"/>
<dbReference type="KEGG" id="bov:BOV_0914"/>
<dbReference type="KEGG" id="bov:BOV_1037"/>
<dbReference type="KEGG" id="bov:BOV_1142"/>
<dbReference type="KEGG" id="bov:BOV_1154"/>
<dbReference type="KEGG" id="bov:BOV_1234"/>
<dbReference type="KEGG" id="bov:BOV_1381"/>
<dbReference type="KEGG" id="bov:BOV_1932"/>
<dbReference type="KEGG" id="bov:BOV_A0158"/>
<dbReference type="KEGG" id="bov:BOV_A0204"/>
<dbReference type="KEGG" id="bov:BOV_A0419"/>
<dbReference type="KEGG" id="bov:BOV_A0470"/>
<dbReference type="KEGG" id="bov:BOV_A0519"/>
<dbReference type="KEGG" id="bov:BOV_A0721"/>
<dbReference type="HOGENOM" id="CLU_055261_9_1_5"/>
<dbReference type="PhylomeDB" id="Q08082"/>
<dbReference type="Proteomes" id="UP000006383">
    <property type="component" value="Chromosome I"/>
</dbReference>
<dbReference type="Proteomes" id="UP000006383">
    <property type="component" value="Chromosome II"/>
</dbReference>
<dbReference type="GO" id="GO:0003677">
    <property type="term" value="F:DNA binding"/>
    <property type="evidence" value="ECO:0007669"/>
    <property type="project" value="UniProtKB-KW"/>
</dbReference>
<dbReference type="GO" id="GO:0004803">
    <property type="term" value="F:transposase activity"/>
    <property type="evidence" value="ECO:0007669"/>
    <property type="project" value="InterPro"/>
</dbReference>
<dbReference type="GO" id="GO:0006313">
    <property type="term" value="P:DNA transposition"/>
    <property type="evidence" value="ECO:0007669"/>
    <property type="project" value="InterPro"/>
</dbReference>
<dbReference type="InterPro" id="IPR002559">
    <property type="entry name" value="Transposase_11"/>
</dbReference>
<dbReference type="NCBIfam" id="NF033580">
    <property type="entry name" value="transpos_IS5_3"/>
    <property type="match status" value="1"/>
</dbReference>
<dbReference type="PANTHER" id="PTHR30007:SF1">
    <property type="entry name" value="BLR1914 PROTEIN"/>
    <property type="match status" value="1"/>
</dbReference>
<dbReference type="PANTHER" id="PTHR30007">
    <property type="entry name" value="PHP DOMAIN PROTEIN"/>
    <property type="match status" value="1"/>
</dbReference>
<dbReference type="Pfam" id="PF01609">
    <property type="entry name" value="DDE_Tnp_1"/>
    <property type="match status" value="1"/>
</dbReference>
<evidence type="ECO:0000305" key="1"/>
<keyword id="KW-0233">DNA recombination</keyword>
<keyword id="KW-0238">DNA-binding</keyword>
<keyword id="KW-0814">Transposable element</keyword>
<keyword id="KW-0815">Transposition</keyword>
<organism>
    <name type="scientific">Brucella ovis (strain ATCC 25840 / 63/290 / NCTC 10512)</name>
    <dbReference type="NCBI Taxonomy" id="444178"/>
    <lineage>
        <taxon>Bacteria</taxon>
        <taxon>Pseudomonadati</taxon>
        <taxon>Pseudomonadota</taxon>
        <taxon>Alphaproteobacteria</taxon>
        <taxon>Hyphomicrobiales</taxon>
        <taxon>Brucellaceae</taxon>
        <taxon>Brucella/Ochrobactrum group</taxon>
        <taxon>Brucella</taxon>
    </lineage>
</organism>
<name>T6501_BRUO2</name>